<feature type="signal peptide" evidence="1">
    <location>
        <begin position="1"/>
        <end position="20"/>
    </location>
</feature>
<feature type="chain" id="PRO_0000032808" description="Outer membrane protein assembly factor BamE">
    <location>
        <begin position="21"/>
        <end position="102"/>
    </location>
</feature>
<evidence type="ECO:0000255" key="1">
    <source>
        <dbReference type="HAMAP-Rule" id="MF_00925"/>
    </source>
</evidence>
<proteinExistence type="inferred from homology"/>
<accession>P57283</accession>
<name>BAME_BUCAI</name>
<keyword id="KW-0998">Cell outer membrane</keyword>
<keyword id="KW-0472">Membrane</keyword>
<keyword id="KW-1185">Reference proteome</keyword>
<keyword id="KW-0732">Signal</keyword>
<organism>
    <name type="scientific">Buchnera aphidicola subsp. Acyrthosiphon pisum (strain APS)</name>
    <name type="common">Acyrthosiphon pisum symbiotic bacterium</name>
    <dbReference type="NCBI Taxonomy" id="107806"/>
    <lineage>
        <taxon>Bacteria</taxon>
        <taxon>Pseudomonadati</taxon>
        <taxon>Pseudomonadota</taxon>
        <taxon>Gammaproteobacteria</taxon>
        <taxon>Enterobacterales</taxon>
        <taxon>Erwiniaceae</taxon>
        <taxon>Buchnera</taxon>
    </lineage>
</organism>
<reference key="1">
    <citation type="journal article" date="2000" name="Nature">
        <title>Genome sequence of the endocellular bacterial symbiont of aphids Buchnera sp. APS.</title>
        <authorList>
            <person name="Shigenobu S."/>
            <person name="Watanabe H."/>
            <person name="Hattori M."/>
            <person name="Sakaki Y."/>
            <person name="Ishikawa H."/>
        </authorList>
    </citation>
    <scope>NUCLEOTIDE SEQUENCE [LARGE SCALE GENOMIC DNA]</scope>
    <source>
        <strain>APS</strain>
    </source>
</reference>
<protein>
    <recommendedName>
        <fullName evidence="1">Outer membrane protein assembly factor BamE</fullName>
    </recommendedName>
</protein>
<comment type="function">
    <text evidence="1">Part of the outer membrane protein assembly complex, which is involved in assembly and insertion of beta-barrel proteins into the outer membrane.</text>
</comment>
<comment type="subunit">
    <text evidence="1">Part of the Bam complex.</text>
</comment>
<comment type="subcellular location">
    <subcellularLocation>
        <location evidence="1">Cell outer membrane</location>
    </subcellularLocation>
</comment>
<comment type="similarity">
    <text evidence="1">Belongs to the BamE family.</text>
</comment>
<gene>
    <name evidence="1" type="primary">bamE</name>
    <name type="synonym">smpA</name>
    <name type="ordered locus">BU186</name>
</gene>
<sequence length="102" mass="12080">MNNYIKALLIIICFSSCSISDKNKYNLDVLEATHLNKNILNRNYVGMTRQQIVYIFGIPIISDSFDDIYHYYLSDSKNNNVYPKKMLNLYFKDNKVFKFNMT</sequence>
<dbReference type="EMBL" id="BA000003">
    <property type="protein sequence ID" value="BAB12903.1"/>
    <property type="molecule type" value="Genomic_DNA"/>
</dbReference>
<dbReference type="RefSeq" id="NP_240017.1">
    <property type="nucleotide sequence ID" value="NC_002528.1"/>
</dbReference>
<dbReference type="RefSeq" id="WP_010895990.1">
    <property type="nucleotide sequence ID" value="NZ_AP036055.1"/>
</dbReference>
<dbReference type="SMR" id="P57283"/>
<dbReference type="STRING" id="563178.BUAP5A_183"/>
<dbReference type="EnsemblBacteria" id="BAB12903">
    <property type="protein sequence ID" value="BAB12903"/>
    <property type="gene ID" value="BAB12903"/>
</dbReference>
<dbReference type="KEGG" id="buc:BU186"/>
<dbReference type="PATRIC" id="fig|107806.10.peg.197"/>
<dbReference type="eggNOG" id="COG2913">
    <property type="taxonomic scope" value="Bacteria"/>
</dbReference>
<dbReference type="HOGENOM" id="CLU_2272055_0_0_6"/>
<dbReference type="Proteomes" id="UP000001806">
    <property type="component" value="Chromosome"/>
</dbReference>
<dbReference type="GO" id="GO:1990063">
    <property type="term" value="C:Bam protein complex"/>
    <property type="evidence" value="ECO:0007669"/>
    <property type="project" value="TreeGrafter"/>
</dbReference>
<dbReference type="GO" id="GO:0030674">
    <property type="term" value="F:protein-macromolecule adaptor activity"/>
    <property type="evidence" value="ECO:0007669"/>
    <property type="project" value="TreeGrafter"/>
</dbReference>
<dbReference type="GO" id="GO:0043165">
    <property type="term" value="P:Gram-negative-bacterium-type cell outer membrane assembly"/>
    <property type="evidence" value="ECO:0007669"/>
    <property type="project" value="UniProtKB-UniRule"/>
</dbReference>
<dbReference type="GO" id="GO:0051205">
    <property type="term" value="P:protein insertion into membrane"/>
    <property type="evidence" value="ECO:0007669"/>
    <property type="project" value="UniProtKB-UniRule"/>
</dbReference>
<dbReference type="Gene3D" id="3.30.1450.10">
    <property type="match status" value="1"/>
</dbReference>
<dbReference type="HAMAP" id="MF_00925">
    <property type="entry name" value="OM_assembly_BamE"/>
    <property type="match status" value="1"/>
</dbReference>
<dbReference type="InterPro" id="IPR026592">
    <property type="entry name" value="BamE"/>
</dbReference>
<dbReference type="InterPro" id="IPR037873">
    <property type="entry name" value="BamE-like"/>
</dbReference>
<dbReference type="InterPro" id="IPR007450">
    <property type="entry name" value="BamE_dom"/>
</dbReference>
<dbReference type="PANTHER" id="PTHR37482">
    <property type="entry name" value="OUTER MEMBRANE PROTEIN ASSEMBLY FACTOR BAME"/>
    <property type="match status" value="1"/>
</dbReference>
<dbReference type="PANTHER" id="PTHR37482:SF1">
    <property type="entry name" value="OUTER MEMBRANE PROTEIN ASSEMBLY FACTOR BAME"/>
    <property type="match status" value="1"/>
</dbReference>
<dbReference type="Pfam" id="PF04355">
    <property type="entry name" value="BamE"/>
    <property type="match status" value="1"/>
</dbReference>